<protein>
    <recommendedName>
        <fullName evidence="1">Large ribosomal subunit protein uL18</fullName>
    </recommendedName>
    <alternativeName>
        <fullName evidence="2">50S ribosomal protein L18</fullName>
    </alternativeName>
</protein>
<organism>
    <name type="scientific">Phytoplasma mali (strain AT)</name>
    <dbReference type="NCBI Taxonomy" id="482235"/>
    <lineage>
        <taxon>Bacteria</taxon>
        <taxon>Bacillati</taxon>
        <taxon>Mycoplasmatota</taxon>
        <taxon>Mollicutes</taxon>
        <taxon>Acholeplasmatales</taxon>
        <taxon>Acholeplasmataceae</taxon>
        <taxon>Candidatus Phytoplasma</taxon>
        <taxon>16SrX (Apple proliferation group)</taxon>
    </lineage>
</organism>
<name>RL18_PHYMT</name>
<accession>B3R007</accession>
<comment type="function">
    <text evidence="1">This is one of the proteins that bind and probably mediate the attachment of the 5S RNA into the large ribosomal subunit, where it forms part of the central protuberance.</text>
</comment>
<comment type="subunit">
    <text evidence="1">Part of the 50S ribosomal subunit; part of the 5S rRNA/L5/L18/L25 subcomplex. Contacts the 5S and 23S rRNAs.</text>
</comment>
<comment type="similarity">
    <text evidence="1">Belongs to the universal ribosomal protein uL18 family.</text>
</comment>
<proteinExistence type="inferred from homology"/>
<dbReference type="EMBL" id="CU469464">
    <property type="protein sequence ID" value="CAP18544.1"/>
    <property type="molecule type" value="Genomic_DNA"/>
</dbReference>
<dbReference type="SMR" id="B3R007"/>
<dbReference type="STRING" id="37692.ATP_00357"/>
<dbReference type="KEGG" id="pml:ATP_00357"/>
<dbReference type="eggNOG" id="COG0256">
    <property type="taxonomic scope" value="Bacteria"/>
</dbReference>
<dbReference type="HOGENOM" id="CLU_098841_0_1_14"/>
<dbReference type="Proteomes" id="UP000002020">
    <property type="component" value="Chromosome"/>
</dbReference>
<dbReference type="GO" id="GO:0005737">
    <property type="term" value="C:cytoplasm"/>
    <property type="evidence" value="ECO:0007669"/>
    <property type="project" value="UniProtKB-ARBA"/>
</dbReference>
<dbReference type="GO" id="GO:1990904">
    <property type="term" value="C:ribonucleoprotein complex"/>
    <property type="evidence" value="ECO:0007669"/>
    <property type="project" value="UniProtKB-KW"/>
</dbReference>
<dbReference type="GO" id="GO:0005840">
    <property type="term" value="C:ribosome"/>
    <property type="evidence" value="ECO:0007669"/>
    <property type="project" value="UniProtKB-KW"/>
</dbReference>
<dbReference type="GO" id="GO:0008097">
    <property type="term" value="F:5S rRNA binding"/>
    <property type="evidence" value="ECO:0007669"/>
    <property type="project" value="TreeGrafter"/>
</dbReference>
<dbReference type="GO" id="GO:0003735">
    <property type="term" value="F:structural constituent of ribosome"/>
    <property type="evidence" value="ECO:0007669"/>
    <property type="project" value="InterPro"/>
</dbReference>
<dbReference type="GO" id="GO:0006412">
    <property type="term" value="P:translation"/>
    <property type="evidence" value="ECO:0007669"/>
    <property type="project" value="UniProtKB-UniRule"/>
</dbReference>
<dbReference type="CDD" id="cd00432">
    <property type="entry name" value="Ribosomal_L18_L5e"/>
    <property type="match status" value="1"/>
</dbReference>
<dbReference type="FunFam" id="3.30.420.100:FF:000001">
    <property type="entry name" value="50S ribosomal protein L18"/>
    <property type="match status" value="1"/>
</dbReference>
<dbReference type="Gene3D" id="3.30.420.100">
    <property type="match status" value="1"/>
</dbReference>
<dbReference type="HAMAP" id="MF_01337_B">
    <property type="entry name" value="Ribosomal_uL18_B"/>
    <property type="match status" value="1"/>
</dbReference>
<dbReference type="InterPro" id="IPR004389">
    <property type="entry name" value="Ribosomal_uL18_bac-type"/>
</dbReference>
<dbReference type="InterPro" id="IPR005484">
    <property type="entry name" value="Ribosomal_uL18_bac/euk"/>
</dbReference>
<dbReference type="NCBIfam" id="TIGR00060">
    <property type="entry name" value="L18_bact"/>
    <property type="match status" value="1"/>
</dbReference>
<dbReference type="PANTHER" id="PTHR12899">
    <property type="entry name" value="39S RIBOSOMAL PROTEIN L18, MITOCHONDRIAL"/>
    <property type="match status" value="1"/>
</dbReference>
<dbReference type="PANTHER" id="PTHR12899:SF3">
    <property type="entry name" value="LARGE RIBOSOMAL SUBUNIT PROTEIN UL18M"/>
    <property type="match status" value="1"/>
</dbReference>
<dbReference type="Pfam" id="PF00861">
    <property type="entry name" value="Ribosomal_L18p"/>
    <property type="match status" value="1"/>
</dbReference>
<dbReference type="SUPFAM" id="SSF53137">
    <property type="entry name" value="Translational machinery components"/>
    <property type="match status" value="1"/>
</dbReference>
<gene>
    <name evidence="1" type="primary">rplR</name>
    <name type="ordered locus">ATP_00357</name>
</gene>
<sequence length="117" mass="13274">MIIKKISNLVRKKRHLKLRKKIIGTNQKPRLNIFRSNKSFYIQLIDDEKRITLCSVHSKEVDSKGLNITTATKVGELIAQKALAQGIVNVVFDRGGFLYHGKIEALADASRRLGLKF</sequence>
<evidence type="ECO:0000255" key="1">
    <source>
        <dbReference type="HAMAP-Rule" id="MF_01337"/>
    </source>
</evidence>
<evidence type="ECO:0000305" key="2"/>
<reference key="1">
    <citation type="journal article" date="2008" name="BMC Genomics">
        <title>The linear chromosome of the plant-pathogenic mycoplasma 'Candidatus Phytoplasma mali'.</title>
        <authorList>
            <person name="Kube M."/>
            <person name="Schneider B."/>
            <person name="Kuhl H."/>
            <person name="Dandekar T."/>
            <person name="Heitmann K."/>
            <person name="Migdoll A.M."/>
            <person name="Reinhardt R."/>
            <person name="Seemueller E."/>
        </authorList>
    </citation>
    <scope>NUCLEOTIDE SEQUENCE [LARGE SCALE GENOMIC DNA]</scope>
    <source>
        <strain>AT</strain>
    </source>
</reference>
<feature type="chain" id="PRO_1000166243" description="Large ribosomal subunit protein uL18">
    <location>
        <begin position="1"/>
        <end position="117"/>
    </location>
</feature>
<keyword id="KW-1185">Reference proteome</keyword>
<keyword id="KW-0687">Ribonucleoprotein</keyword>
<keyword id="KW-0689">Ribosomal protein</keyword>
<keyword id="KW-0694">RNA-binding</keyword>
<keyword id="KW-0699">rRNA-binding</keyword>